<protein>
    <recommendedName>
        <fullName>C-X-C chemokine receptor type 6</fullName>
        <shortName>CXC-R6</shortName>
        <shortName>CXCR-6</shortName>
    </recommendedName>
    <alternativeName>
        <fullName>G-protein coupled receptor bonzo</fullName>
    </alternativeName>
    <cdAntigenName>CD186</cdAntigenName>
</protein>
<proteinExistence type="inferred from homology"/>
<accession>O19024</accession>
<sequence>MAEHDYHEDYGLNSFNDSSQEEHQDFLQFRKVFLPCMYLVVFVCGLVGNSLVLVISIFYHKLQSLTDVFLVNLPLADLVFVCTLPFWAYAGIHEWIFGQVMCKTLLGVYTINFYTSMLILTCITVDRFIVVVKATKAYNQQAKRMTWGKVICLLIWVISLLVSLPQIIYGNVFNLDKLICGYHDKEISTVVLATQMTLGFFLPLLAMIVCYSVIIKTLLHAGGFQKHRSLKIIFLVMAVFLLTQTPFNLVKLIRSTHWEYYAMTSFHYTIIVTEAIAYLRACLNPVLYAFVSLKFRKNFWKLVKDIGCLPYLGVSHQWKSSEDNSKTFSASHNVEATSMFQL</sequence>
<organism>
    <name type="scientific">Macaca nemestrina</name>
    <name type="common">Pig-tailed macaque</name>
    <dbReference type="NCBI Taxonomy" id="9545"/>
    <lineage>
        <taxon>Eukaryota</taxon>
        <taxon>Metazoa</taxon>
        <taxon>Chordata</taxon>
        <taxon>Craniata</taxon>
        <taxon>Vertebrata</taxon>
        <taxon>Euteleostomi</taxon>
        <taxon>Mammalia</taxon>
        <taxon>Eutheria</taxon>
        <taxon>Euarchontoglires</taxon>
        <taxon>Primates</taxon>
        <taxon>Haplorrhini</taxon>
        <taxon>Catarrhini</taxon>
        <taxon>Cercopithecidae</taxon>
        <taxon>Cercopithecinae</taxon>
        <taxon>Macaca</taxon>
    </lineage>
</organism>
<name>CXCR6_MACNE</name>
<dbReference type="EMBL" id="AF007858">
    <property type="protein sequence ID" value="AAB64224.1"/>
    <property type="molecule type" value="Genomic_DNA"/>
</dbReference>
<dbReference type="SMR" id="O19024"/>
<dbReference type="STRING" id="9545.ENSMNEP00000026508"/>
<dbReference type="GlyCosmos" id="O19024">
    <property type="glycosylation" value="1 site, No reported glycans"/>
</dbReference>
<dbReference type="Proteomes" id="UP000233120">
    <property type="component" value="Unassembled WGS sequence"/>
</dbReference>
<dbReference type="GO" id="GO:0009897">
    <property type="term" value="C:external side of plasma membrane"/>
    <property type="evidence" value="ECO:0007669"/>
    <property type="project" value="TreeGrafter"/>
</dbReference>
<dbReference type="GO" id="GO:0019957">
    <property type="term" value="F:C-C chemokine binding"/>
    <property type="evidence" value="ECO:0007669"/>
    <property type="project" value="TreeGrafter"/>
</dbReference>
<dbReference type="GO" id="GO:0016493">
    <property type="term" value="F:C-C chemokine receptor activity"/>
    <property type="evidence" value="ECO:0007669"/>
    <property type="project" value="TreeGrafter"/>
</dbReference>
<dbReference type="GO" id="GO:0016494">
    <property type="term" value="F:C-X-C chemokine receptor activity"/>
    <property type="evidence" value="ECO:0007669"/>
    <property type="project" value="InterPro"/>
</dbReference>
<dbReference type="GO" id="GO:0015026">
    <property type="term" value="F:coreceptor activity"/>
    <property type="evidence" value="ECO:0007669"/>
    <property type="project" value="InterPro"/>
</dbReference>
<dbReference type="GO" id="GO:0019722">
    <property type="term" value="P:calcium-mediated signaling"/>
    <property type="evidence" value="ECO:0007669"/>
    <property type="project" value="TreeGrafter"/>
</dbReference>
<dbReference type="GO" id="GO:0060326">
    <property type="term" value="P:cell chemotaxis"/>
    <property type="evidence" value="ECO:0007669"/>
    <property type="project" value="TreeGrafter"/>
</dbReference>
<dbReference type="GO" id="GO:0006955">
    <property type="term" value="P:immune response"/>
    <property type="evidence" value="ECO:0007669"/>
    <property type="project" value="TreeGrafter"/>
</dbReference>
<dbReference type="GO" id="GO:0006954">
    <property type="term" value="P:inflammatory response"/>
    <property type="evidence" value="ECO:0007669"/>
    <property type="project" value="InterPro"/>
</dbReference>
<dbReference type="GO" id="GO:0007204">
    <property type="term" value="P:positive regulation of cytosolic calcium ion concentration"/>
    <property type="evidence" value="ECO:0007669"/>
    <property type="project" value="TreeGrafter"/>
</dbReference>
<dbReference type="CDD" id="cd15173">
    <property type="entry name" value="7tmA_CXCR6"/>
    <property type="match status" value="1"/>
</dbReference>
<dbReference type="FunFam" id="1.20.1070.10:FF:000035">
    <property type="entry name" value="C-C chemokine receptor type 6"/>
    <property type="match status" value="1"/>
</dbReference>
<dbReference type="Gene3D" id="1.20.1070.10">
    <property type="entry name" value="Rhodopsin 7-helix transmembrane proteins"/>
    <property type="match status" value="1"/>
</dbReference>
<dbReference type="InterPro" id="IPR050119">
    <property type="entry name" value="CCR1-9-like"/>
</dbReference>
<dbReference type="InterPro" id="IPR002235">
    <property type="entry name" value="Chemokine_CXCR6"/>
</dbReference>
<dbReference type="InterPro" id="IPR000355">
    <property type="entry name" value="Chemokine_rcpt"/>
</dbReference>
<dbReference type="InterPro" id="IPR000276">
    <property type="entry name" value="GPCR_Rhodpsn"/>
</dbReference>
<dbReference type="InterPro" id="IPR017452">
    <property type="entry name" value="GPCR_Rhodpsn_7TM"/>
</dbReference>
<dbReference type="PANTHER" id="PTHR10489:SF705">
    <property type="entry name" value="C-X-C CHEMOKINE RECEPTOR TYPE 6"/>
    <property type="match status" value="1"/>
</dbReference>
<dbReference type="PANTHER" id="PTHR10489">
    <property type="entry name" value="CELL ADHESION MOLECULE"/>
    <property type="match status" value="1"/>
</dbReference>
<dbReference type="Pfam" id="PF00001">
    <property type="entry name" value="7tm_1"/>
    <property type="match status" value="1"/>
</dbReference>
<dbReference type="PRINTS" id="PR00657">
    <property type="entry name" value="CCCHEMOKINER"/>
</dbReference>
<dbReference type="PRINTS" id="PR01105">
    <property type="entry name" value="CXCCHMKINER6"/>
</dbReference>
<dbReference type="PRINTS" id="PR00237">
    <property type="entry name" value="GPCRRHODOPSN"/>
</dbReference>
<dbReference type="SUPFAM" id="SSF81321">
    <property type="entry name" value="Family A G protein-coupled receptor-like"/>
    <property type="match status" value="1"/>
</dbReference>
<dbReference type="PROSITE" id="PS00237">
    <property type="entry name" value="G_PROTEIN_RECEP_F1_1"/>
    <property type="match status" value="1"/>
</dbReference>
<dbReference type="PROSITE" id="PS50262">
    <property type="entry name" value="G_PROTEIN_RECEP_F1_2"/>
    <property type="match status" value="1"/>
</dbReference>
<feature type="chain" id="PRO_0000069368" description="C-X-C chemokine receptor type 6">
    <location>
        <begin position="1"/>
        <end position="342"/>
    </location>
</feature>
<feature type="topological domain" description="Extracellular" evidence="1">
    <location>
        <begin position="1"/>
        <end position="32"/>
    </location>
</feature>
<feature type="transmembrane region" description="Helical; Name=1" evidence="1">
    <location>
        <begin position="33"/>
        <end position="59"/>
    </location>
</feature>
<feature type="topological domain" description="Cytoplasmic" evidence="1">
    <location>
        <begin position="60"/>
        <end position="68"/>
    </location>
</feature>
<feature type="transmembrane region" description="Helical; Name=2" evidence="1">
    <location>
        <begin position="69"/>
        <end position="89"/>
    </location>
</feature>
<feature type="topological domain" description="Extracellular" evidence="1">
    <location>
        <begin position="90"/>
        <end position="103"/>
    </location>
</feature>
<feature type="transmembrane region" description="Helical; Name=3" evidence="1">
    <location>
        <begin position="104"/>
        <end position="125"/>
    </location>
</feature>
<feature type="topological domain" description="Cytoplasmic" evidence="1">
    <location>
        <begin position="126"/>
        <end position="143"/>
    </location>
</feature>
<feature type="transmembrane region" description="Helical; Name=4" evidence="1">
    <location>
        <begin position="144"/>
        <end position="164"/>
    </location>
</feature>
<feature type="topological domain" description="Extracellular" evidence="1">
    <location>
        <begin position="165"/>
        <end position="187"/>
    </location>
</feature>
<feature type="transmembrane region" description="Helical; Name=5" evidence="1">
    <location>
        <begin position="188"/>
        <end position="215"/>
    </location>
</feature>
<feature type="topological domain" description="Cytoplasmic" evidence="1">
    <location>
        <begin position="216"/>
        <end position="231"/>
    </location>
</feature>
<feature type="transmembrane region" description="Helical; Name=6" evidence="1">
    <location>
        <begin position="232"/>
        <end position="259"/>
    </location>
</feature>
<feature type="topological domain" description="Extracellular" evidence="1">
    <location>
        <begin position="260"/>
        <end position="275"/>
    </location>
</feature>
<feature type="transmembrane region" description="Helical; Name=7" evidence="1">
    <location>
        <begin position="276"/>
        <end position="293"/>
    </location>
</feature>
<feature type="topological domain" description="Cytoplasmic" evidence="1">
    <location>
        <begin position="294"/>
        <end position="342"/>
    </location>
</feature>
<feature type="glycosylation site" description="N-linked (GlcNAc...) asparagine" evidence="1">
    <location>
        <position position="16"/>
    </location>
</feature>
<feature type="disulfide bond" evidence="2">
    <location>
        <begin position="102"/>
        <end position="180"/>
    </location>
</feature>
<keyword id="KW-1003">Cell membrane</keyword>
<keyword id="KW-1015">Disulfide bond</keyword>
<keyword id="KW-0297">G-protein coupled receptor</keyword>
<keyword id="KW-0325">Glycoprotein</keyword>
<keyword id="KW-0472">Membrane</keyword>
<keyword id="KW-0675">Receptor</keyword>
<keyword id="KW-1185">Reference proteome</keyword>
<keyword id="KW-0807">Transducer</keyword>
<keyword id="KW-0812">Transmembrane</keyword>
<keyword id="KW-1133">Transmembrane helix</keyword>
<comment type="function">
    <text>Receptor for the C-X-C chemokine CXCL16. Used as a coreceptor by SIVs and by strains of HIV-2 and m-tropic HIV-1.</text>
</comment>
<comment type="subcellular location">
    <subcellularLocation>
        <location>Cell membrane</location>
        <topology>Multi-pass membrane protein</topology>
    </subcellularLocation>
</comment>
<comment type="similarity">
    <text evidence="2">Belongs to the G-protein coupled receptor 1 family.</text>
</comment>
<evidence type="ECO:0000255" key="1"/>
<evidence type="ECO:0000255" key="2">
    <source>
        <dbReference type="PROSITE-ProRule" id="PRU00521"/>
    </source>
</evidence>
<reference key="1">
    <citation type="journal article" date="1997" name="Nature">
        <title>Expression cloning of new receptors used by simian and human immunodeficiency viruses.</title>
        <authorList>
            <person name="Deng H.K."/>
            <person name="Unutmaz D."/>
            <person name="Kewalramani V.N."/>
            <person name="Littman D.R."/>
        </authorList>
    </citation>
    <scope>NUCLEOTIDE SEQUENCE [GENOMIC DNA]</scope>
</reference>
<gene>
    <name type="primary">CXCR6</name>
    <name type="synonym">BONZO</name>
</gene>